<reference key="1">
    <citation type="journal article" date="2006" name="Proc. Natl. Acad. Sci. U.S.A.">
        <title>Burkholderia xenovorans LB400 harbors a multi-replicon, 9.73-Mbp genome shaped for versatility.</title>
        <authorList>
            <person name="Chain P.S.G."/>
            <person name="Denef V.J."/>
            <person name="Konstantinidis K.T."/>
            <person name="Vergez L.M."/>
            <person name="Agullo L."/>
            <person name="Reyes V.L."/>
            <person name="Hauser L."/>
            <person name="Cordova M."/>
            <person name="Gomez L."/>
            <person name="Gonzalez M."/>
            <person name="Land M."/>
            <person name="Lao V."/>
            <person name="Larimer F."/>
            <person name="LiPuma J.J."/>
            <person name="Mahenthiralingam E."/>
            <person name="Malfatti S.A."/>
            <person name="Marx C.J."/>
            <person name="Parnell J.J."/>
            <person name="Ramette A."/>
            <person name="Richardson P."/>
            <person name="Seeger M."/>
            <person name="Smith D."/>
            <person name="Spilker T."/>
            <person name="Sul W.J."/>
            <person name="Tsoi T.V."/>
            <person name="Ulrich L.E."/>
            <person name="Zhulin I.B."/>
            <person name="Tiedje J.M."/>
        </authorList>
    </citation>
    <scope>NUCLEOTIDE SEQUENCE [LARGE SCALE GENOMIC DNA]</scope>
    <source>
        <strain>LB400</strain>
    </source>
</reference>
<organism>
    <name type="scientific">Paraburkholderia xenovorans (strain LB400)</name>
    <dbReference type="NCBI Taxonomy" id="266265"/>
    <lineage>
        <taxon>Bacteria</taxon>
        <taxon>Pseudomonadati</taxon>
        <taxon>Pseudomonadota</taxon>
        <taxon>Betaproteobacteria</taxon>
        <taxon>Burkholderiales</taxon>
        <taxon>Burkholderiaceae</taxon>
        <taxon>Paraburkholderia</taxon>
    </lineage>
</organism>
<proteinExistence type="inferred from homology"/>
<evidence type="ECO:0000255" key="1">
    <source>
        <dbReference type="HAMAP-Rule" id="MF_01838"/>
    </source>
</evidence>
<feature type="chain" id="PRO_1000070478" description="Enoyl-[acyl-carrier-protein] reductase [NADH]">
    <location>
        <begin position="1"/>
        <end position="398"/>
    </location>
</feature>
<feature type="active site" description="Proton donor" evidence="1">
    <location>
        <position position="235"/>
    </location>
</feature>
<feature type="binding site" evidence="1">
    <location>
        <begin position="48"/>
        <end position="53"/>
    </location>
    <ligand>
        <name>NAD(+)</name>
        <dbReference type="ChEBI" id="CHEBI:57540"/>
    </ligand>
</feature>
<feature type="binding site" evidence="1">
    <location>
        <begin position="74"/>
        <end position="75"/>
    </location>
    <ligand>
        <name>NAD(+)</name>
        <dbReference type="ChEBI" id="CHEBI:57540"/>
    </ligand>
</feature>
<feature type="binding site" evidence="1">
    <location>
        <begin position="111"/>
        <end position="112"/>
    </location>
    <ligand>
        <name>NAD(+)</name>
        <dbReference type="ChEBI" id="CHEBI:57540"/>
    </ligand>
</feature>
<feature type="binding site" evidence="1">
    <location>
        <begin position="139"/>
        <end position="140"/>
    </location>
    <ligand>
        <name>NAD(+)</name>
        <dbReference type="ChEBI" id="CHEBI:57540"/>
    </ligand>
</feature>
<feature type="binding site" evidence="1">
    <location>
        <position position="225"/>
    </location>
    <ligand>
        <name>substrate</name>
    </ligand>
</feature>
<feature type="binding site" evidence="1">
    <location>
        <position position="244"/>
    </location>
    <ligand>
        <name>NAD(+)</name>
        <dbReference type="ChEBI" id="CHEBI:57540"/>
    </ligand>
</feature>
<feature type="binding site" evidence="1">
    <location>
        <begin position="273"/>
        <end position="275"/>
    </location>
    <ligand>
        <name>NAD(+)</name>
        <dbReference type="ChEBI" id="CHEBI:57540"/>
    </ligand>
</feature>
<feature type="site" description="Plays an important role in discriminating NADH against NADPH" evidence="1">
    <location>
        <position position="75"/>
    </location>
</feature>
<protein>
    <recommendedName>
        <fullName evidence="1">Enoyl-[acyl-carrier-protein] reductase [NADH]</fullName>
        <shortName evidence="1">ENR</shortName>
        <ecNumber evidence="1">1.3.1.9</ecNumber>
    </recommendedName>
</protein>
<sequence length="398" mass="43396">MIIKPRVRGFICVSTHPTGCEANVREQIEYVKARGPIANGPKKVLVIGASTGYGLAARISAAFGSDAATLGVFFERAGSETKAGTAGWYNTAAFEKFATEQGLYATSINGDAFSDAVKQRTIEVIKRDLGQVDLVVYSLAAPKRTHPKSGEVFSSTLKPVGQAVNLRGIDTDKEVIRETVLEPATQDEIDHTVAVMGGEDWQMWIDALLEAGVLADGAKTTAFTYLGEKITHDIYWNGSIGAAKKDLDQKVLGIREKLAAKGGDARVSVLKAVVTQASSAIPMMPLYLSLLFKVMKEKGTHEGCIEQVYGLYKDSLYGAAPHLDDEGRLRADYKELDPEVQDRVQTLWSQVTNDNIYELTDFSGYKTDFLRLFGFEIAGVDYEADVNPDVQIPKLVQV</sequence>
<name>FABV_PARXL</name>
<dbReference type="EC" id="1.3.1.9" evidence="1"/>
<dbReference type="EMBL" id="CP000270">
    <property type="protein sequence ID" value="ABE30771.1"/>
    <property type="molecule type" value="Genomic_DNA"/>
</dbReference>
<dbReference type="RefSeq" id="WP_011488385.1">
    <property type="nucleotide sequence ID" value="NC_007951.1"/>
</dbReference>
<dbReference type="SMR" id="Q13YR8"/>
<dbReference type="STRING" id="266265.Bxe_A2198"/>
<dbReference type="KEGG" id="bxb:DR64_4351"/>
<dbReference type="KEGG" id="bxe:Bxe_A2198"/>
<dbReference type="PATRIC" id="fig|266265.5.peg.2333"/>
<dbReference type="eggNOG" id="COG3007">
    <property type="taxonomic scope" value="Bacteria"/>
</dbReference>
<dbReference type="OrthoDB" id="9802260at2"/>
<dbReference type="UniPathway" id="UPA00094"/>
<dbReference type="Proteomes" id="UP000001817">
    <property type="component" value="Chromosome 1"/>
</dbReference>
<dbReference type="GO" id="GO:0004318">
    <property type="term" value="F:enoyl-[acyl-carrier-protein] reductase (NADH) activity"/>
    <property type="evidence" value="ECO:0007669"/>
    <property type="project" value="UniProtKB-UniRule"/>
</dbReference>
<dbReference type="GO" id="GO:0051287">
    <property type="term" value="F:NAD binding"/>
    <property type="evidence" value="ECO:0007669"/>
    <property type="project" value="UniProtKB-UniRule"/>
</dbReference>
<dbReference type="GO" id="GO:0050343">
    <property type="term" value="F:trans-2-enoyl-CoA reductase (NADH) activity"/>
    <property type="evidence" value="ECO:0007669"/>
    <property type="project" value="TreeGrafter"/>
</dbReference>
<dbReference type="GO" id="GO:0006633">
    <property type="term" value="P:fatty acid biosynthetic process"/>
    <property type="evidence" value="ECO:0007669"/>
    <property type="project" value="UniProtKB-UniRule"/>
</dbReference>
<dbReference type="FunFam" id="3.40.50.720:FF:000221">
    <property type="entry name" value="Enoyl-[acyl-carrier-protein] reductase [NADH]"/>
    <property type="match status" value="1"/>
</dbReference>
<dbReference type="Gene3D" id="3.40.50.720">
    <property type="entry name" value="NAD(P)-binding Rossmann-like Domain"/>
    <property type="match status" value="1"/>
</dbReference>
<dbReference type="HAMAP" id="MF_01838">
    <property type="entry name" value="FabV_reductase"/>
    <property type="match status" value="1"/>
</dbReference>
<dbReference type="InterPro" id="IPR024906">
    <property type="entry name" value="Eno_Rdtase_FAD-bd_dom"/>
</dbReference>
<dbReference type="InterPro" id="IPR024910">
    <property type="entry name" value="Enoyl-CoA_Rdtase_cat_dom"/>
</dbReference>
<dbReference type="InterPro" id="IPR050048">
    <property type="entry name" value="FabV-like_NADH_b"/>
</dbReference>
<dbReference type="InterPro" id="IPR010758">
    <property type="entry name" value="Trans-2-enoyl-CoA_reductase"/>
</dbReference>
<dbReference type="NCBIfam" id="NF043048">
    <property type="entry name" value="EnoyACPredFabV"/>
    <property type="match status" value="1"/>
</dbReference>
<dbReference type="NCBIfam" id="NF010177">
    <property type="entry name" value="PRK13656.1"/>
    <property type="match status" value="1"/>
</dbReference>
<dbReference type="PANTHER" id="PTHR37480">
    <property type="entry name" value="ENOYL-[ACYL-CARRIER-PROTEIN] REDUCTASE [NADH]"/>
    <property type="match status" value="1"/>
</dbReference>
<dbReference type="PANTHER" id="PTHR37480:SF1">
    <property type="entry name" value="ENOYL-[ACYL-CARRIER-PROTEIN] REDUCTASE [NADH]"/>
    <property type="match status" value="1"/>
</dbReference>
<dbReference type="Pfam" id="PF07055">
    <property type="entry name" value="Eno-Rase_FAD_bd"/>
    <property type="match status" value="1"/>
</dbReference>
<dbReference type="Pfam" id="PF12242">
    <property type="entry name" value="Eno-Rase_NADH_b"/>
    <property type="match status" value="1"/>
</dbReference>
<dbReference type="Pfam" id="PF12241">
    <property type="entry name" value="Enoyl_reductase"/>
    <property type="match status" value="1"/>
</dbReference>
<accession>Q13YR8</accession>
<comment type="function">
    <text evidence="1">Involved in the final reduction of the elongation cycle of fatty acid synthesis (FAS II). Catalyzes the reduction of a carbon-carbon double bond in an enoyl moiety that is covalently linked to an acyl carrier protein (ACP).</text>
</comment>
<comment type="catalytic activity">
    <reaction evidence="1">
        <text>a 2,3-saturated acyl-[ACP] + NAD(+) = a (2E)-enoyl-[ACP] + NADH + H(+)</text>
        <dbReference type="Rhea" id="RHEA:10240"/>
        <dbReference type="Rhea" id="RHEA-COMP:9925"/>
        <dbReference type="Rhea" id="RHEA-COMP:9926"/>
        <dbReference type="ChEBI" id="CHEBI:15378"/>
        <dbReference type="ChEBI" id="CHEBI:57540"/>
        <dbReference type="ChEBI" id="CHEBI:57945"/>
        <dbReference type="ChEBI" id="CHEBI:78784"/>
        <dbReference type="ChEBI" id="CHEBI:78785"/>
        <dbReference type="EC" id="1.3.1.9"/>
    </reaction>
</comment>
<comment type="pathway">
    <text evidence="1">Lipid metabolism; fatty acid biosynthesis.</text>
</comment>
<comment type="subunit">
    <text evidence="1">Monomer.</text>
</comment>
<comment type="similarity">
    <text evidence="1">Belongs to the TER reductase family.</text>
</comment>
<gene>
    <name evidence="1" type="primary">fabV</name>
    <name type="ordered locus">Bxeno_A2233</name>
    <name type="ORF">Bxe_A2198</name>
</gene>
<keyword id="KW-0275">Fatty acid biosynthesis</keyword>
<keyword id="KW-0276">Fatty acid metabolism</keyword>
<keyword id="KW-0444">Lipid biosynthesis</keyword>
<keyword id="KW-0443">Lipid metabolism</keyword>
<keyword id="KW-0520">NAD</keyword>
<keyword id="KW-0560">Oxidoreductase</keyword>
<keyword id="KW-1185">Reference proteome</keyword>